<reference key="1">
    <citation type="journal article" date="2004" name="Nature">
        <title>Genome sequence of the Brown Norway rat yields insights into mammalian evolution.</title>
        <authorList>
            <person name="Gibbs R.A."/>
            <person name="Weinstock G.M."/>
            <person name="Metzker M.L."/>
            <person name="Muzny D.M."/>
            <person name="Sodergren E.J."/>
            <person name="Scherer S."/>
            <person name="Scott G."/>
            <person name="Steffen D."/>
            <person name="Worley K.C."/>
            <person name="Burch P.E."/>
            <person name="Okwuonu G."/>
            <person name="Hines S."/>
            <person name="Lewis L."/>
            <person name="Deramo C."/>
            <person name="Delgado O."/>
            <person name="Dugan-Rocha S."/>
            <person name="Miner G."/>
            <person name="Morgan M."/>
            <person name="Hawes A."/>
            <person name="Gill R."/>
            <person name="Holt R.A."/>
            <person name="Adams M.D."/>
            <person name="Amanatides P.G."/>
            <person name="Baden-Tillson H."/>
            <person name="Barnstead M."/>
            <person name="Chin S."/>
            <person name="Evans C.A."/>
            <person name="Ferriera S."/>
            <person name="Fosler C."/>
            <person name="Glodek A."/>
            <person name="Gu Z."/>
            <person name="Jennings D."/>
            <person name="Kraft C.L."/>
            <person name="Nguyen T."/>
            <person name="Pfannkoch C.M."/>
            <person name="Sitter C."/>
            <person name="Sutton G.G."/>
            <person name="Venter J.C."/>
            <person name="Woodage T."/>
            <person name="Smith D."/>
            <person name="Lee H.-M."/>
            <person name="Gustafson E."/>
            <person name="Cahill P."/>
            <person name="Kana A."/>
            <person name="Doucette-Stamm L."/>
            <person name="Weinstock K."/>
            <person name="Fechtel K."/>
            <person name="Weiss R.B."/>
            <person name="Dunn D.M."/>
            <person name="Green E.D."/>
            <person name="Blakesley R.W."/>
            <person name="Bouffard G.G."/>
            <person name="De Jong P.J."/>
            <person name="Osoegawa K."/>
            <person name="Zhu B."/>
            <person name="Marra M."/>
            <person name="Schein J."/>
            <person name="Bosdet I."/>
            <person name="Fjell C."/>
            <person name="Jones S."/>
            <person name="Krzywinski M."/>
            <person name="Mathewson C."/>
            <person name="Siddiqui A."/>
            <person name="Wye N."/>
            <person name="McPherson J."/>
            <person name="Zhao S."/>
            <person name="Fraser C.M."/>
            <person name="Shetty J."/>
            <person name="Shatsman S."/>
            <person name="Geer K."/>
            <person name="Chen Y."/>
            <person name="Abramzon S."/>
            <person name="Nierman W.C."/>
            <person name="Havlak P.H."/>
            <person name="Chen R."/>
            <person name="Durbin K.J."/>
            <person name="Egan A."/>
            <person name="Ren Y."/>
            <person name="Song X.-Z."/>
            <person name="Li B."/>
            <person name="Liu Y."/>
            <person name="Qin X."/>
            <person name="Cawley S."/>
            <person name="Cooney A.J."/>
            <person name="D'Souza L.M."/>
            <person name="Martin K."/>
            <person name="Wu J.Q."/>
            <person name="Gonzalez-Garay M.L."/>
            <person name="Jackson A.R."/>
            <person name="Kalafus K.J."/>
            <person name="McLeod M.P."/>
            <person name="Milosavljevic A."/>
            <person name="Virk D."/>
            <person name="Volkov A."/>
            <person name="Wheeler D.A."/>
            <person name="Zhang Z."/>
            <person name="Bailey J.A."/>
            <person name="Eichler E.E."/>
            <person name="Tuzun E."/>
            <person name="Birney E."/>
            <person name="Mongin E."/>
            <person name="Ureta-Vidal A."/>
            <person name="Woodwark C."/>
            <person name="Zdobnov E."/>
            <person name="Bork P."/>
            <person name="Suyama M."/>
            <person name="Torrents D."/>
            <person name="Alexandersson M."/>
            <person name="Trask B.J."/>
            <person name="Young J.M."/>
            <person name="Huang H."/>
            <person name="Wang H."/>
            <person name="Xing H."/>
            <person name="Daniels S."/>
            <person name="Gietzen D."/>
            <person name="Schmidt J."/>
            <person name="Stevens K."/>
            <person name="Vitt U."/>
            <person name="Wingrove J."/>
            <person name="Camara F."/>
            <person name="Mar Alba M."/>
            <person name="Abril J.F."/>
            <person name="Guigo R."/>
            <person name="Smit A."/>
            <person name="Dubchak I."/>
            <person name="Rubin E.M."/>
            <person name="Couronne O."/>
            <person name="Poliakov A."/>
            <person name="Huebner N."/>
            <person name="Ganten D."/>
            <person name="Goesele C."/>
            <person name="Hummel O."/>
            <person name="Kreitler T."/>
            <person name="Lee Y.-A."/>
            <person name="Monti J."/>
            <person name="Schulz H."/>
            <person name="Zimdahl H."/>
            <person name="Himmelbauer H."/>
            <person name="Lehrach H."/>
            <person name="Jacob H.J."/>
            <person name="Bromberg S."/>
            <person name="Gullings-Handley J."/>
            <person name="Jensen-Seaman M.I."/>
            <person name="Kwitek A.E."/>
            <person name="Lazar J."/>
            <person name="Pasko D."/>
            <person name="Tonellato P.J."/>
            <person name="Twigger S."/>
            <person name="Ponting C.P."/>
            <person name="Duarte J.M."/>
            <person name="Rice S."/>
            <person name="Goodstadt L."/>
            <person name="Beatson S.A."/>
            <person name="Emes R.D."/>
            <person name="Winter E.E."/>
            <person name="Webber C."/>
            <person name="Brandt P."/>
            <person name="Nyakatura G."/>
            <person name="Adetobi M."/>
            <person name="Chiaromonte F."/>
            <person name="Elnitski L."/>
            <person name="Eswara P."/>
            <person name="Hardison R.C."/>
            <person name="Hou M."/>
            <person name="Kolbe D."/>
            <person name="Makova K."/>
            <person name="Miller W."/>
            <person name="Nekrutenko A."/>
            <person name="Riemer C."/>
            <person name="Schwartz S."/>
            <person name="Taylor J."/>
            <person name="Yang S."/>
            <person name="Zhang Y."/>
            <person name="Lindpaintner K."/>
            <person name="Andrews T.D."/>
            <person name="Caccamo M."/>
            <person name="Clamp M."/>
            <person name="Clarke L."/>
            <person name="Curwen V."/>
            <person name="Durbin R.M."/>
            <person name="Eyras E."/>
            <person name="Searle S.M."/>
            <person name="Cooper G.M."/>
            <person name="Batzoglou S."/>
            <person name="Brudno M."/>
            <person name="Sidow A."/>
            <person name="Stone E.A."/>
            <person name="Payseur B.A."/>
            <person name="Bourque G."/>
            <person name="Lopez-Otin C."/>
            <person name="Puente X.S."/>
            <person name="Chakrabarti K."/>
            <person name="Chatterji S."/>
            <person name="Dewey C."/>
            <person name="Pachter L."/>
            <person name="Bray N."/>
            <person name="Yap V.B."/>
            <person name="Caspi A."/>
            <person name="Tesler G."/>
            <person name="Pevzner P.A."/>
            <person name="Haussler D."/>
            <person name="Roskin K.M."/>
            <person name="Baertsch R."/>
            <person name="Clawson H."/>
            <person name="Furey T.S."/>
            <person name="Hinrichs A.S."/>
            <person name="Karolchik D."/>
            <person name="Kent W.J."/>
            <person name="Rosenbloom K.R."/>
            <person name="Trumbower H."/>
            <person name="Weirauch M."/>
            <person name="Cooper D.N."/>
            <person name="Stenson P.D."/>
            <person name="Ma B."/>
            <person name="Brent M."/>
            <person name="Arumugam M."/>
            <person name="Shteynberg D."/>
            <person name="Copley R.R."/>
            <person name="Taylor M.S."/>
            <person name="Riethman H."/>
            <person name="Mudunuri U."/>
            <person name="Peterson J."/>
            <person name="Guyer M."/>
            <person name="Felsenfeld A."/>
            <person name="Old S."/>
            <person name="Mockrin S."/>
            <person name="Collins F.S."/>
        </authorList>
    </citation>
    <scope>NUCLEOTIDE SEQUENCE [LARGE SCALE GENOMIC DNA]</scope>
    <source>
        <strain>Brown Norway</strain>
    </source>
</reference>
<reference key="2">
    <citation type="journal article" date="1998" name="Immunogenetics">
        <title>Isolation and molecular characterization of the rat MR1 homologue, a non-MHC-linked class I-related gene.</title>
        <authorList>
            <person name="Walter L."/>
            <person name="Guenther E."/>
        </authorList>
    </citation>
    <scope>NUCLEOTIDE SEQUENCE [MRNA] OF 25-342</scope>
    <scope>TISSUE SPECIFICITY</scope>
    <source>
        <strain>Lewis.1W</strain>
    </source>
</reference>
<evidence type="ECO:0000250" key="1">
    <source>
        <dbReference type="UniProtKB" id="C1ITJ8"/>
    </source>
</evidence>
<evidence type="ECO:0000250" key="2">
    <source>
        <dbReference type="UniProtKB" id="Q95460"/>
    </source>
</evidence>
<evidence type="ECO:0000255" key="3"/>
<evidence type="ECO:0000255" key="4">
    <source>
        <dbReference type="PROSITE-ProRule" id="PRU00114"/>
    </source>
</evidence>
<evidence type="ECO:0000269" key="5">
    <source>
    </source>
</evidence>
<evidence type="ECO:0000303" key="6">
    <source>
    </source>
</evidence>
<evidence type="ECO:0000305" key="7"/>
<sequence length="343" mass="39571">MMFLLPFLTVFLAKQSHTRTHSLRYFRLAISDPGPGVPEFISVGYVDSHPITTYDSVTRQKEPRAPWMAENLAPDHWERYTQLLRGWQRTFQTELRHLQRHYNHSGLHTYQRMIGCELLEDGSTTGFLQYAYDGQDFIVFDKDTLSWLAMDNVAHITKRAWEANLHELQYQKNWLEEECIAWLKRFLEYGSDALERTEHPVVRTTRKETFPGITTLFCRAHGFYPPEISMIWKKNGEEIVQEVDYGGVLPSGDGTYQMWVSVDLDPQTKDIYSCHVEHCGLQMVLEAPQESGNTLLVANTISGTIILIIVLAGVGALIWRRRSREPKEVMYQPTQVNEGSSPS</sequence>
<proteinExistence type="evidence at transcript level"/>
<organism>
    <name type="scientific">Rattus norvegicus</name>
    <name type="common">Rat</name>
    <dbReference type="NCBI Taxonomy" id="10116"/>
    <lineage>
        <taxon>Eukaryota</taxon>
        <taxon>Metazoa</taxon>
        <taxon>Chordata</taxon>
        <taxon>Craniata</taxon>
        <taxon>Vertebrata</taxon>
        <taxon>Euteleostomi</taxon>
        <taxon>Mammalia</taxon>
        <taxon>Eutheria</taxon>
        <taxon>Euarchontoglires</taxon>
        <taxon>Glires</taxon>
        <taxon>Rodentia</taxon>
        <taxon>Myomorpha</taxon>
        <taxon>Muroidea</taxon>
        <taxon>Muridae</taxon>
        <taxon>Murinae</taxon>
        <taxon>Rattus</taxon>
    </lineage>
</organism>
<dbReference type="EMBL" id="AABR03084784">
    <property type="status" value="NOT_ANNOTATED_CDS"/>
    <property type="molecule type" value="Genomic_DNA"/>
</dbReference>
<dbReference type="EMBL" id="Y13972">
    <property type="protein sequence ID" value="CAA74305.1"/>
    <property type="molecule type" value="mRNA"/>
</dbReference>
<dbReference type="RefSeq" id="NP_001094105.1">
    <property type="nucleotide sequence ID" value="NM_001100635.1"/>
</dbReference>
<dbReference type="SMR" id="O19477"/>
<dbReference type="FunCoup" id="O19477">
    <property type="interactions" value="167"/>
</dbReference>
<dbReference type="STRING" id="10116.ENSRNOP00000004694"/>
<dbReference type="GlyCosmos" id="O19477">
    <property type="glycosylation" value="1 site, No reported glycans"/>
</dbReference>
<dbReference type="GlyGen" id="O19477">
    <property type="glycosylation" value="1 site"/>
</dbReference>
<dbReference type="PhosphoSitePlus" id="O19477"/>
<dbReference type="PaxDb" id="10116-ENSRNOP00000004694"/>
<dbReference type="GeneID" id="25119"/>
<dbReference type="KEGG" id="rno:25119"/>
<dbReference type="UCSC" id="RGD:1593291">
    <property type="organism name" value="rat"/>
</dbReference>
<dbReference type="AGR" id="RGD:1593291"/>
<dbReference type="CTD" id="3140"/>
<dbReference type="RGD" id="1593291">
    <property type="gene designation" value="Mr1"/>
</dbReference>
<dbReference type="eggNOG" id="ENOG502RQEK">
    <property type="taxonomic scope" value="Eukaryota"/>
</dbReference>
<dbReference type="HOGENOM" id="CLU_047501_0_1_1"/>
<dbReference type="InParanoid" id="O19477"/>
<dbReference type="OrthoDB" id="24624at9989"/>
<dbReference type="PhylomeDB" id="O19477"/>
<dbReference type="TreeFam" id="TF336617"/>
<dbReference type="PRO" id="PR:O19477"/>
<dbReference type="Proteomes" id="UP000002494">
    <property type="component" value="Unplaced"/>
</dbReference>
<dbReference type="GO" id="GO:0031901">
    <property type="term" value="C:early endosome membrane"/>
    <property type="evidence" value="ECO:0000266"/>
    <property type="project" value="RGD"/>
</dbReference>
<dbReference type="GO" id="GO:0005783">
    <property type="term" value="C:endoplasmic reticulum"/>
    <property type="evidence" value="ECO:0000266"/>
    <property type="project" value="RGD"/>
</dbReference>
<dbReference type="GO" id="GO:0005789">
    <property type="term" value="C:endoplasmic reticulum membrane"/>
    <property type="evidence" value="ECO:0000266"/>
    <property type="project" value="RGD"/>
</dbReference>
<dbReference type="GO" id="GO:0009897">
    <property type="term" value="C:external side of plasma membrane"/>
    <property type="evidence" value="ECO:0000318"/>
    <property type="project" value="GO_Central"/>
</dbReference>
<dbReference type="GO" id="GO:0005615">
    <property type="term" value="C:extracellular space"/>
    <property type="evidence" value="ECO:0000318"/>
    <property type="project" value="GO_Central"/>
</dbReference>
<dbReference type="GO" id="GO:0000139">
    <property type="term" value="C:Golgi membrane"/>
    <property type="evidence" value="ECO:0007669"/>
    <property type="project" value="UniProtKB-SubCell"/>
</dbReference>
<dbReference type="GO" id="GO:0031902">
    <property type="term" value="C:late endosome membrane"/>
    <property type="evidence" value="ECO:0000266"/>
    <property type="project" value="RGD"/>
</dbReference>
<dbReference type="GO" id="GO:0042612">
    <property type="term" value="C:MHC class I protein complex"/>
    <property type="evidence" value="ECO:0007669"/>
    <property type="project" value="UniProtKB-KW"/>
</dbReference>
<dbReference type="GO" id="GO:0005886">
    <property type="term" value="C:plasma membrane"/>
    <property type="evidence" value="ECO:0000266"/>
    <property type="project" value="RGD"/>
</dbReference>
<dbReference type="GO" id="GO:0030881">
    <property type="term" value="F:beta-2-microglobulin binding"/>
    <property type="evidence" value="ECO:0000266"/>
    <property type="project" value="RGD"/>
</dbReference>
<dbReference type="GO" id="GO:0042608">
    <property type="term" value="F:T cell receptor binding"/>
    <property type="evidence" value="ECO:0000266"/>
    <property type="project" value="RGD"/>
</dbReference>
<dbReference type="GO" id="GO:0019884">
    <property type="term" value="P:antigen processing and presentation of exogenous antigen"/>
    <property type="evidence" value="ECO:0000266"/>
    <property type="project" value="RGD"/>
</dbReference>
<dbReference type="GO" id="GO:0002474">
    <property type="term" value="P:antigen processing and presentation of peptide antigen via MHC class I"/>
    <property type="evidence" value="ECO:0007669"/>
    <property type="project" value="UniProtKB-KW"/>
</dbReference>
<dbReference type="GO" id="GO:0050829">
    <property type="term" value="P:defense response to Gram-negative bacterium"/>
    <property type="evidence" value="ECO:0000266"/>
    <property type="project" value="RGD"/>
</dbReference>
<dbReference type="GO" id="GO:0050830">
    <property type="term" value="P:defense response to Gram-positive bacterium"/>
    <property type="evidence" value="ECO:0000266"/>
    <property type="project" value="RGD"/>
</dbReference>
<dbReference type="GO" id="GO:0006955">
    <property type="term" value="P:immune response"/>
    <property type="evidence" value="ECO:0000318"/>
    <property type="project" value="GO_Central"/>
</dbReference>
<dbReference type="GO" id="GO:0045087">
    <property type="term" value="P:innate immune response"/>
    <property type="evidence" value="ECO:0007669"/>
    <property type="project" value="UniProtKB-KW"/>
</dbReference>
<dbReference type="GO" id="GO:0002854">
    <property type="term" value="P:positive regulation of T cell mediated cytotoxicity directed against tumor cell target"/>
    <property type="evidence" value="ECO:0000266"/>
    <property type="project" value="RGD"/>
</dbReference>
<dbReference type="GO" id="GO:0033077">
    <property type="term" value="P:T cell differentiation in thymus"/>
    <property type="evidence" value="ECO:0000266"/>
    <property type="project" value="RGD"/>
</dbReference>
<dbReference type="CDD" id="cd07698">
    <property type="entry name" value="IgC1_MHC_I_alpha3"/>
    <property type="match status" value="1"/>
</dbReference>
<dbReference type="FunFam" id="3.30.500.10:FF:000001">
    <property type="entry name" value="H-2 class I histocompatibility antigen, alpha chain"/>
    <property type="match status" value="1"/>
</dbReference>
<dbReference type="FunFam" id="2.60.40.10:FF:000204">
    <property type="entry name" value="Major histocompatibility complex, class I-related protein"/>
    <property type="match status" value="1"/>
</dbReference>
<dbReference type="Gene3D" id="2.60.40.10">
    <property type="entry name" value="Immunoglobulins"/>
    <property type="match status" value="1"/>
</dbReference>
<dbReference type="Gene3D" id="3.30.500.10">
    <property type="entry name" value="MHC class I-like antigen recognition-like"/>
    <property type="match status" value="1"/>
</dbReference>
<dbReference type="InterPro" id="IPR007110">
    <property type="entry name" value="Ig-like_dom"/>
</dbReference>
<dbReference type="InterPro" id="IPR036179">
    <property type="entry name" value="Ig-like_dom_sf"/>
</dbReference>
<dbReference type="InterPro" id="IPR013783">
    <property type="entry name" value="Ig-like_fold"/>
</dbReference>
<dbReference type="InterPro" id="IPR003006">
    <property type="entry name" value="Ig/MHC_CS"/>
</dbReference>
<dbReference type="InterPro" id="IPR003597">
    <property type="entry name" value="Ig_C1-set"/>
</dbReference>
<dbReference type="InterPro" id="IPR050208">
    <property type="entry name" value="MHC_class-I_related"/>
</dbReference>
<dbReference type="InterPro" id="IPR011161">
    <property type="entry name" value="MHC_I-like_Ag-recog"/>
</dbReference>
<dbReference type="InterPro" id="IPR037055">
    <property type="entry name" value="MHC_I-like_Ag-recog_sf"/>
</dbReference>
<dbReference type="InterPro" id="IPR011162">
    <property type="entry name" value="MHC_I/II-like_Ag-recog"/>
</dbReference>
<dbReference type="InterPro" id="IPR001039">
    <property type="entry name" value="MHC_I_a_a1/a2"/>
</dbReference>
<dbReference type="PANTHER" id="PTHR16675:SF242">
    <property type="entry name" value="MAJOR HISTOCOMPATIBILITY COMPLEX CLASS I-RELATED GENE PROTEIN"/>
    <property type="match status" value="1"/>
</dbReference>
<dbReference type="PANTHER" id="PTHR16675">
    <property type="entry name" value="MHC CLASS I-RELATED"/>
    <property type="match status" value="1"/>
</dbReference>
<dbReference type="Pfam" id="PF07654">
    <property type="entry name" value="C1-set"/>
    <property type="match status" value="1"/>
</dbReference>
<dbReference type="Pfam" id="PF00129">
    <property type="entry name" value="MHC_I"/>
    <property type="match status" value="1"/>
</dbReference>
<dbReference type="PRINTS" id="PR01638">
    <property type="entry name" value="MHCCLASSI"/>
</dbReference>
<dbReference type="SMART" id="SM00407">
    <property type="entry name" value="IGc1"/>
    <property type="match status" value="1"/>
</dbReference>
<dbReference type="SUPFAM" id="SSF48726">
    <property type="entry name" value="Immunoglobulin"/>
    <property type="match status" value="1"/>
</dbReference>
<dbReference type="SUPFAM" id="SSF54452">
    <property type="entry name" value="MHC antigen-recognition domain"/>
    <property type="match status" value="1"/>
</dbReference>
<dbReference type="PROSITE" id="PS50835">
    <property type="entry name" value="IG_LIKE"/>
    <property type="match status" value="1"/>
</dbReference>
<dbReference type="PROSITE" id="PS00290">
    <property type="entry name" value="IG_MHC"/>
    <property type="match status" value="1"/>
</dbReference>
<comment type="function">
    <text evidence="2">Antigen-presenting molecule specialized in displaying microbial pyrimidine-based metabolites to alpha-beta T cell receptors (TCR) on innate-type mucosal-associated invariant T (MAIT) cells. In complex with B2M preferentially presents riboflavin-derived metabolites to semi-invariant TCRs on MAIT cells, guiding immune surveillance of the microbial metabolome at mucosal epithelial barriers. Signature pyrimidine-based microbial antigens are generated via non-enzymatic condensation of metabolite intermediates of the riboflavin pathway with by-products arising from other metabolic pathways such as glycolysis. Typical potent antigenic metabolites are 5-(2-oxoethylideneamino)-6-D-ribitylaminouracil (5-OE-RU) and 5-(2-oxopropylideneamino)-6-D-ribitylaminouracil (5-OP-RU), products of condensation of 5-amino-6-D-ribityaminouracil (5-A-RU) with glyoxal or methylglyoxal by-products, respectively. May present microbial antigens to various MAIT cell subsets, providing for unique recognition of diverse microbes, including pathogens that do not synthesize riboflavin. Upon antigen recognition, elicits rapid innate-type MAIT cell activation to eliminate pathogenic microbes by directly killing infected cells. During T cell development, drives thymic selection and post-thymic terminal differentiation of MAIT cells in a process dependent on commensal microflora. Acts as an immune sensor of cancer cell metabolome. May present a tumor-specific or -associated metabolite essential for cancer cell survival to a pan-cancer TCR on a non-MAIT CD8-positive T cell clone, triggering T cell-mediated killing of a wide range of cancer cell types. May present tumor-enriched pyridoxal and pyridoxal 5'-phosphate antigens, enabling preferential recognition of cancer cells. Presents nucleobase carbonyl adducts generated during oxidative stress. Captures M3Ade, a nucleobase adduct composed of one adenine modified by a malondialdehyde trimer, for recognition by MR1-restricted T cell clones expressing a polyclonal TCR repertoire.</text>
</comment>
<comment type="subunit">
    <text evidence="1 2">Heterotrimer that consists of MR1, B2M and metabolite antigen. Major classes of metabolite ligands presented by MR1 include riboflavin-related antigens, pyrimidines and ribityl lumazines, nucleobase adducts and folate derivatives. Forms reversible covalent Schiff base complexes with microbial pyrimidine-based metabolite, which serves as a molecular switch triggering complete folding, stable association with B2M and translocation of the ternary complex from endoplasmic reticulum to the plasma membrane. Alternatively, forms non-Schiff base complexes with ribityl lumazines. On antigen-presenting cells, the ternary complex interacts with TCR on MR1-restricted T cells. Interacts with TAPBP and TAPBPL chaperones in the endoplasmic reticulum. TAPBP associated or not with MHC class I peptide loading complex binds ligand-free MR1 or MR1-B2M complex, providing for stable MR1 pools ready for metabolite antigen processing. TAPBPL interacts with MR1 in a ligand-independent way; this interaction may stabilize MR1 pool and facilitate ligand loading and dissociation. Structurally, MR1-B2M heterodimer adopts a topology similar to classical MHC class I molecules, with alpha-1 and alpha-2 domains of MR1 forming the antigen-binding cleft composed of two alpha-helices resting on a floor of 7-stranded anti-parallel beta-pleated sheet (By similarity). MR1-B2M heterodimer (via alpha-helices) interacts with TCR (via CDR domains) (By similarity).</text>
</comment>
<comment type="subcellular location">
    <subcellularLocation>
        <location evidence="1">Cell membrane</location>
        <topology evidence="2">Single-pass type I membrane protein</topology>
    </subcellularLocation>
    <subcellularLocation>
        <location evidence="2">Endoplasmic reticulum membrane</location>
        <topology evidence="3">Single-pass type I membrane protein</topology>
    </subcellularLocation>
    <subcellularLocation>
        <location evidence="2">Golgi apparatus membrane</location>
        <topology evidence="3">Single-pass type I membrane protein</topology>
    </subcellularLocation>
    <subcellularLocation>
        <location evidence="2">Early endosome membrane</location>
        <topology evidence="3">Single-pass type I membrane protein</topology>
    </subcellularLocation>
    <subcellularLocation>
        <location evidence="2">Late endosome membrane</location>
        <topology evidence="3">Single-pass type I membrane protein</topology>
    </subcellularLocation>
    <text evidence="2">In the absence of antigen remains within the endoplasmic reticulum where it acts as a metabolite sensor. Antigen binding triggers trafficking of the ternary complex to the plasma membrane. After presentation, most of these complexes are rapidly internalized and degraded via endocytosis. A small subset recycles via endosomes back to the plasma membrane and may thus acquire and present new antigens that do not efficiently reach the endoplasmic reticulum.</text>
</comment>
<comment type="tissue specificity">
    <text evidence="5">Expressed in kidney, liver, testis, spleen, thymus, brain, and heart.</text>
</comment>
<comment type="domain">
    <text evidence="2">The alpha-1 domain is a structural part of antigen-binding cleft.</text>
</comment>
<comment type="domain">
    <text evidence="2">The alpha-2 domain is a structural part of antigen-binding cleft.</text>
</comment>
<comment type="PTM">
    <text evidence="2">N-glycosylated.</text>
</comment>
<feature type="signal peptide" evidence="3">
    <location>
        <begin position="1"/>
        <end position="18"/>
    </location>
</feature>
<feature type="chain" id="PRO_0000344446" description="Major histocompatibility complex class I-related protein 1">
    <location>
        <begin position="19"/>
        <end position="343"/>
    </location>
</feature>
<feature type="topological domain" description="Extracellular" evidence="3">
    <location>
        <begin position="19"/>
        <end position="298"/>
    </location>
</feature>
<feature type="transmembrane region" description="Helical" evidence="3">
    <location>
        <begin position="299"/>
        <end position="319"/>
    </location>
</feature>
<feature type="topological domain" description="Cytoplasmic" evidence="3">
    <location>
        <begin position="320"/>
        <end position="343"/>
    </location>
</feature>
<feature type="domain" description="Ig-like C1-type" evidence="4">
    <location>
        <begin position="200"/>
        <end position="302"/>
    </location>
</feature>
<feature type="region of interest" description="Antigen-binding cleft" evidence="2">
    <location>
        <begin position="19"/>
        <end position="197"/>
    </location>
</feature>
<feature type="region of interest" description="Alpha-1" evidence="3">
    <location>
        <begin position="19"/>
        <end position="105"/>
    </location>
</feature>
<feature type="region of interest" description="Alpha-2" evidence="3">
    <location>
        <begin position="106"/>
        <end position="197"/>
    </location>
</feature>
<feature type="region of interest" description="Alpha-3" evidence="3">
    <location>
        <begin position="198"/>
        <end position="289"/>
    </location>
</feature>
<feature type="region of interest" description="Connecting peptide" evidence="3">
    <location>
        <begin position="290"/>
        <end position="298"/>
    </location>
</feature>
<feature type="binding site" evidence="2">
    <location>
        <position position="25"/>
    </location>
    <ligand>
        <name>8-(9H-purin-6-yl)-2-oxa-8-azabicyclo[3.3.1]nona-3,6-diene-4,6-dicarbaldehyde</name>
        <dbReference type="ChEBI" id="CHEBI:233180"/>
    </ligand>
</feature>
<feature type="binding site" evidence="2">
    <location>
        <position position="27"/>
    </location>
    <ligand>
        <name>5-(2-oxoethylideneamino)-6-(D-ribitylamino)uracil</name>
        <dbReference type="ChEBI" id="CHEBI:78397"/>
        <note>pathogen-derived metabolite antigen</note>
    </ligand>
</feature>
<feature type="binding site" evidence="2">
    <location>
        <position position="27"/>
    </location>
    <ligand>
        <name>5-(2-oxopropylideneamino)-6-(D-ribitylamino)uracil</name>
        <dbReference type="ChEBI" id="CHEBI:78398"/>
        <note>pathogen-derived metabolite antigen</note>
    </ligand>
</feature>
<feature type="binding site" evidence="2">
    <location>
        <position position="27"/>
    </location>
    <ligand>
        <name>7-hydroxy-6-methyl-8-(1-D-ribityl)lumazine</name>
        <dbReference type="ChEBI" id="CHEBI:233481"/>
        <note>pathogen-derived metabolite antigen</note>
    </ligand>
</feature>
<feature type="binding site" evidence="2">
    <location>
        <position position="27"/>
    </location>
    <ligand>
        <name>8-(9H-purin-6-yl)-2-oxa-8-azabicyclo[3.3.1]nona-3,6-diene-4,6-dicarbaldehyde</name>
        <dbReference type="ChEBI" id="CHEBI:233180"/>
    </ligand>
</feature>
<feature type="binding site" evidence="2">
    <location>
        <position position="42"/>
    </location>
    <ligand>
        <name>5-(2-oxoethylideneamino)-6-(D-ribitylamino)uracil</name>
        <dbReference type="ChEBI" id="CHEBI:78397"/>
        <note>pathogen-derived metabolite antigen</note>
    </ligand>
</feature>
<feature type="binding site" evidence="2">
    <location>
        <position position="42"/>
    </location>
    <ligand>
        <name>5-(2-oxopropylideneamino)-6-(D-ribitylamino)uracil</name>
        <dbReference type="ChEBI" id="CHEBI:78398"/>
        <note>pathogen-derived metabolite antigen</note>
    </ligand>
</feature>
<feature type="binding site" evidence="2">
    <location>
        <position position="42"/>
    </location>
    <ligand>
        <name>7-hydroxy-6-methyl-8-(1-D-ribityl)lumazine</name>
        <dbReference type="ChEBI" id="CHEBI:233481"/>
        <note>pathogen-derived metabolite antigen</note>
    </ligand>
</feature>
<feature type="binding site" description="covalent" evidence="2">
    <location>
        <position position="61"/>
    </location>
    <ligand>
        <name>2-amino-4-oxopteridine-6-carbaldehyde</name>
        <dbReference type="ChEBI" id="CHEBI:70981"/>
    </ligand>
</feature>
<feature type="binding site" description="covalent" evidence="2">
    <location>
        <position position="61"/>
    </location>
    <ligand>
        <name>5-(2-oxoethylideneamino)-6-(D-ribitylamino)uracil</name>
        <dbReference type="ChEBI" id="CHEBI:78397"/>
        <note>pathogen-derived metabolite antigen</note>
    </ligand>
</feature>
<feature type="binding site" description="covalent" evidence="2">
    <location>
        <position position="61"/>
    </location>
    <ligand>
        <name>5-(2-oxopropylideneamino)-6-(D-ribitylamino)uracil</name>
        <dbReference type="ChEBI" id="CHEBI:78398"/>
        <note>pathogen-derived metabolite antigen</note>
    </ligand>
</feature>
<feature type="binding site" evidence="2">
    <location>
        <position position="61"/>
    </location>
    <ligand>
        <name>7-hydroxy-6-methyl-8-(1-D-ribityl)lumazine</name>
        <dbReference type="ChEBI" id="CHEBI:233481"/>
        <note>pathogen-derived metabolite antigen</note>
    </ligand>
</feature>
<feature type="binding site" description="covalent" evidence="2">
    <location>
        <position position="61"/>
    </location>
    <ligand>
        <name>8-(9H-purin-6-yl)-2-oxa-8-azabicyclo[3.3.1]nona-3,6-diene-4,6-dicarbaldehyde</name>
        <dbReference type="ChEBI" id="CHEBI:233180"/>
    </ligand>
</feature>
<feature type="binding site" description="covalent" evidence="2">
    <location>
        <position position="61"/>
    </location>
    <ligand>
        <name>pyridoxal</name>
        <dbReference type="ChEBI" id="CHEBI:17310"/>
    </ligand>
</feature>
<feature type="binding site" evidence="2">
    <location>
        <position position="76"/>
    </location>
    <ligand>
        <name>8-(9H-purin-6-yl)-2-oxa-8-azabicyclo[3.3.1]nona-3,6-diene-4,6-dicarbaldehyde</name>
        <dbReference type="ChEBI" id="CHEBI:233180"/>
    </ligand>
</feature>
<feature type="binding site" evidence="2">
    <location>
        <position position="112"/>
    </location>
    <ligand>
        <name>5-(2-oxoethylideneamino)-6-(D-ribitylamino)uracil</name>
        <dbReference type="ChEBI" id="CHEBI:78397"/>
        <note>pathogen-derived metabolite antigen</note>
    </ligand>
</feature>
<feature type="binding site" evidence="2">
    <location>
        <position position="112"/>
    </location>
    <ligand>
        <name>5-(2-oxopropylideneamino)-6-(D-ribitylamino)uracil</name>
        <dbReference type="ChEBI" id="CHEBI:78398"/>
        <note>pathogen-derived metabolite antigen</note>
    </ligand>
</feature>
<feature type="binding site" evidence="2">
    <location>
        <position position="112"/>
    </location>
    <ligand>
        <name>7-hydroxy-6-methyl-8-(1-D-ribityl)lumazine</name>
        <dbReference type="ChEBI" id="CHEBI:233481"/>
        <note>pathogen-derived metabolite antigen</note>
    </ligand>
</feature>
<feature type="binding site" evidence="2">
    <location>
        <position position="112"/>
    </location>
    <ligand>
        <name>8-(9H-purin-6-yl)-2-oxa-8-azabicyclo[3.3.1]nona-3,6-diene-4,6-dicarbaldehyde</name>
        <dbReference type="ChEBI" id="CHEBI:233180"/>
    </ligand>
</feature>
<feature type="binding site" evidence="2">
    <location>
        <position position="170"/>
    </location>
    <ligand>
        <name>5-(2-oxoethylideneamino)-6-(D-ribitylamino)uracil</name>
        <dbReference type="ChEBI" id="CHEBI:78397"/>
        <note>pathogen-derived metabolite antigen</note>
    </ligand>
</feature>
<feature type="binding site" evidence="2">
    <location>
        <position position="170"/>
    </location>
    <ligand>
        <name>5-(2-oxopropylideneamino)-6-(D-ribitylamino)uracil</name>
        <dbReference type="ChEBI" id="CHEBI:78398"/>
        <note>pathogen-derived metabolite antigen</note>
    </ligand>
</feature>
<feature type="binding site" evidence="2">
    <location>
        <position position="170"/>
    </location>
    <ligand>
        <name>7-hydroxy-6-methyl-8-(1-D-ribityl)lumazine</name>
        <dbReference type="ChEBI" id="CHEBI:233481"/>
        <note>pathogen-derived metabolite antigen</note>
    </ligand>
</feature>
<feature type="binding site" evidence="2">
    <location>
        <position position="171"/>
    </location>
    <ligand>
        <name>5-(2-oxoethylideneamino)-6-(D-ribitylamino)uracil</name>
        <dbReference type="ChEBI" id="CHEBI:78397"/>
        <note>pathogen-derived metabolite antigen</note>
    </ligand>
</feature>
<feature type="binding site" evidence="2">
    <location>
        <position position="171"/>
    </location>
    <ligand>
        <name>5-(2-oxopropylideneamino)-6-(D-ribitylamino)uracil</name>
        <dbReference type="ChEBI" id="CHEBI:78398"/>
        <note>pathogen-derived metabolite antigen</note>
    </ligand>
</feature>
<feature type="binding site" evidence="2">
    <location>
        <position position="171"/>
    </location>
    <ligand>
        <name>7-hydroxy-6-methyl-8-(1-D-ribityl)lumazine</name>
        <dbReference type="ChEBI" id="CHEBI:233481"/>
        <note>pathogen-derived metabolite antigen</note>
    </ligand>
</feature>
<feature type="glycosylation site" description="N-linked (GlcNAc...) asparagine" evidence="3">
    <location>
        <position position="103"/>
    </location>
</feature>
<feature type="disulfide bond" evidence="4">
    <location>
        <begin position="116"/>
        <end position="179"/>
    </location>
</feature>
<feature type="disulfide bond" evidence="4">
    <location>
        <begin position="218"/>
        <end position="274"/>
    </location>
</feature>
<feature type="sequence conflict" description="In Ref. 2; CAA74305." evidence="7" ref="2">
    <original>V</original>
    <variation>I</variation>
    <location>
        <position position="284"/>
    </location>
</feature>
<gene>
    <name evidence="6" type="primary">Mr1</name>
    <name type="synonym">Hlals</name>
</gene>
<keyword id="KW-1003">Cell membrane</keyword>
<keyword id="KW-1015">Disulfide bond</keyword>
<keyword id="KW-0256">Endoplasmic reticulum</keyword>
<keyword id="KW-0967">Endosome</keyword>
<keyword id="KW-0325">Glycoprotein</keyword>
<keyword id="KW-0333">Golgi apparatus</keyword>
<keyword id="KW-0391">Immunity</keyword>
<keyword id="KW-0393">Immunoglobulin domain</keyword>
<keyword id="KW-0399">Innate immunity</keyword>
<keyword id="KW-0472">Membrane</keyword>
<keyword id="KW-0490">MHC I</keyword>
<keyword id="KW-1185">Reference proteome</keyword>
<keyword id="KW-0732">Signal</keyword>
<keyword id="KW-0812">Transmembrane</keyword>
<keyword id="KW-1133">Transmembrane helix</keyword>
<name>HMR1_RAT</name>
<protein>
    <recommendedName>
        <fullName>Major histocompatibility complex class I-related protein 1</fullName>
        <shortName>MHC class I-related protein 1</shortName>
    </recommendedName>
</protein>
<accession>O19477</accession>